<gene>
    <name evidence="1" type="primary">pgl</name>
    <name type="ordered locus">YPO1149</name>
    <name type="ordered locus">y3033</name>
    <name type="ordered locus">YP_1011</name>
</gene>
<proteinExistence type="inferred from homology"/>
<reference key="1">
    <citation type="journal article" date="2001" name="Nature">
        <title>Genome sequence of Yersinia pestis, the causative agent of plague.</title>
        <authorList>
            <person name="Parkhill J."/>
            <person name="Wren B.W."/>
            <person name="Thomson N.R."/>
            <person name="Titball R.W."/>
            <person name="Holden M.T.G."/>
            <person name="Prentice M.B."/>
            <person name="Sebaihia M."/>
            <person name="James K.D."/>
            <person name="Churcher C.M."/>
            <person name="Mungall K.L."/>
            <person name="Baker S."/>
            <person name="Basham D."/>
            <person name="Bentley S.D."/>
            <person name="Brooks K."/>
            <person name="Cerdeno-Tarraga A.-M."/>
            <person name="Chillingworth T."/>
            <person name="Cronin A."/>
            <person name="Davies R.M."/>
            <person name="Davis P."/>
            <person name="Dougan G."/>
            <person name="Feltwell T."/>
            <person name="Hamlin N."/>
            <person name="Holroyd S."/>
            <person name="Jagels K."/>
            <person name="Karlyshev A.V."/>
            <person name="Leather S."/>
            <person name="Moule S."/>
            <person name="Oyston P.C.F."/>
            <person name="Quail M.A."/>
            <person name="Rutherford K.M."/>
            <person name="Simmonds M."/>
            <person name="Skelton J."/>
            <person name="Stevens K."/>
            <person name="Whitehead S."/>
            <person name="Barrell B.G."/>
        </authorList>
    </citation>
    <scope>NUCLEOTIDE SEQUENCE [LARGE SCALE GENOMIC DNA]</scope>
    <source>
        <strain>CO-92 / Biovar Orientalis</strain>
    </source>
</reference>
<reference key="2">
    <citation type="journal article" date="2002" name="J. Bacteriol.">
        <title>Genome sequence of Yersinia pestis KIM.</title>
        <authorList>
            <person name="Deng W."/>
            <person name="Burland V."/>
            <person name="Plunkett G. III"/>
            <person name="Boutin A."/>
            <person name="Mayhew G.F."/>
            <person name="Liss P."/>
            <person name="Perna N.T."/>
            <person name="Rose D.J."/>
            <person name="Mau B."/>
            <person name="Zhou S."/>
            <person name="Schwartz D.C."/>
            <person name="Fetherston J.D."/>
            <person name="Lindler L.E."/>
            <person name="Brubaker R.R."/>
            <person name="Plano G.V."/>
            <person name="Straley S.C."/>
            <person name="McDonough K.A."/>
            <person name="Nilles M.L."/>
            <person name="Matson J.S."/>
            <person name="Blattner F.R."/>
            <person name="Perry R.D."/>
        </authorList>
    </citation>
    <scope>NUCLEOTIDE SEQUENCE [LARGE SCALE GENOMIC DNA]</scope>
    <source>
        <strain>KIM10+ / Biovar Mediaevalis</strain>
    </source>
</reference>
<reference key="3">
    <citation type="journal article" date="2004" name="DNA Res.">
        <title>Complete genome sequence of Yersinia pestis strain 91001, an isolate avirulent to humans.</title>
        <authorList>
            <person name="Song Y."/>
            <person name="Tong Z."/>
            <person name="Wang J."/>
            <person name="Wang L."/>
            <person name="Guo Z."/>
            <person name="Han Y."/>
            <person name="Zhang J."/>
            <person name="Pei D."/>
            <person name="Zhou D."/>
            <person name="Qin H."/>
            <person name="Pang X."/>
            <person name="Han Y."/>
            <person name="Zhai J."/>
            <person name="Li M."/>
            <person name="Cui B."/>
            <person name="Qi Z."/>
            <person name="Jin L."/>
            <person name="Dai R."/>
            <person name="Chen F."/>
            <person name="Li S."/>
            <person name="Ye C."/>
            <person name="Du Z."/>
            <person name="Lin W."/>
            <person name="Wang J."/>
            <person name="Yu J."/>
            <person name="Yang H."/>
            <person name="Wang J."/>
            <person name="Huang P."/>
            <person name="Yang R."/>
        </authorList>
    </citation>
    <scope>NUCLEOTIDE SEQUENCE [LARGE SCALE GENOMIC DNA]</scope>
    <source>
        <strain>91001 / Biovar Mediaevalis</strain>
    </source>
</reference>
<sequence length="334" mass="36446">MKQAVYVASPDSQQIHVWQLDSAGELTLLQTVDVPGQVQPMAISPNQRHLYVGVRPDFGIVSYHIADDGTLTAAGMAPLPGSPTHIDTDRQGRFLFSASYSFNCVSISPIDTHGVVQAPIQQLDDLPAPHSANIDPTNQILLVPCLKEDKVRLFDLSAEGQLTPHAQADITVAAGAGPRHMAFHPNHQVAYCVNELNSSVDVYQISNNGQEYHLVQSLDAMPADFTGTRWAADIHITPNGRYLYISDRTANLLGIFTVSEDGRVISLVGHHLTEAQPRGFNIDHSGNFLIASGQKSDHIEVYRIDQNTGELTTLKRYPVGKGPMWVSIRGAQNS</sequence>
<protein>
    <recommendedName>
        <fullName evidence="1">6-phosphogluconolactonase</fullName>
        <shortName evidence="1">6-P-gluconolactonase</shortName>
        <ecNumber evidence="1">3.1.1.31</ecNumber>
    </recommendedName>
</protein>
<name>6PGL_YERPE</name>
<evidence type="ECO:0000255" key="1">
    <source>
        <dbReference type="HAMAP-Rule" id="MF_01605"/>
    </source>
</evidence>
<feature type="chain" id="PRO_0000171142" description="6-phosphogluconolactonase">
    <location>
        <begin position="1"/>
        <end position="334"/>
    </location>
</feature>
<comment type="function">
    <text evidence="1">Catalyzes the hydrolysis of 6-phosphogluconolactone to 6-phosphogluconate.</text>
</comment>
<comment type="catalytic activity">
    <reaction evidence="1">
        <text>6-phospho-D-glucono-1,5-lactone + H2O = 6-phospho-D-gluconate + H(+)</text>
        <dbReference type="Rhea" id="RHEA:12556"/>
        <dbReference type="ChEBI" id="CHEBI:15377"/>
        <dbReference type="ChEBI" id="CHEBI:15378"/>
        <dbReference type="ChEBI" id="CHEBI:57955"/>
        <dbReference type="ChEBI" id="CHEBI:58759"/>
        <dbReference type="EC" id="3.1.1.31"/>
    </reaction>
</comment>
<comment type="pathway">
    <text evidence="1">Carbohydrate degradation; pentose phosphate pathway; D-ribulose 5-phosphate from D-glucose 6-phosphate (oxidative stage): step 2/3.</text>
</comment>
<comment type="similarity">
    <text evidence="1">Belongs to the cycloisomerase 2 family.</text>
</comment>
<accession>Q8ZGX4</accession>
<accession>Q0WHQ0</accession>
<accession>Q74W78</accession>
<accession>Q7CH64</accession>
<keyword id="KW-0119">Carbohydrate metabolism</keyword>
<keyword id="KW-0313">Glucose metabolism</keyword>
<keyword id="KW-0378">Hydrolase</keyword>
<keyword id="KW-1185">Reference proteome</keyword>
<organism>
    <name type="scientific">Yersinia pestis</name>
    <dbReference type="NCBI Taxonomy" id="632"/>
    <lineage>
        <taxon>Bacteria</taxon>
        <taxon>Pseudomonadati</taxon>
        <taxon>Pseudomonadota</taxon>
        <taxon>Gammaproteobacteria</taxon>
        <taxon>Enterobacterales</taxon>
        <taxon>Yersiniaceae</taxon>
        <taxon>Yersinia</taxon>
    </lineage>
</organism>
<dbReference type="EC" id="3.1.1.31" evidence="1"/>
<dbReference type="EMBL" id="AL590842">
    <property type="protein sequence ID" value="CAL19813.1"/>
    <property type="molecule type" value="Genomic_DNA"/>
</dbReference>
<dbReference type="EMBL" id="AE009952">
    <property type="protein sequence ID" value="AAM86584.1"/>
    <property type="molecule type" value="Genomic_DNA"/>
</dbReference>
<dbReference type="EMBL" id="AE017042">
    <property type="protein sequence ID" value="AAS61262.1"/>
    <property type="molecule type" value="Genomic_DNA"/>
</dbReference>
<dbReference type="PIR" id="AC0141">
    <property type="entry name" value="AC0141"/>
</dbReference>
<dbReference type="RefSeq" id="WP_002210760.1">
    <property type="nucleotide sequence ID" value="NZ_WUCM01000016.1"/>
</dbReference>
<dbReference type="RefSeq" id="YP_002346188.1">
    <property type="nucleotide sequence ID" value="NC_003143.1"/>
</dbReference>
<dbReference type="SMR" id="Q8ZGX4"/>
<dbReference type="IntAct" id="Q8ZGX4">
    <property type="interactions" value="7"/>
</dbReference>
<dbReference type="STRING" id="214092.YPO1149"/>
<dbReference type="PaxDb" id="214092-YPO1149"/>
<dbReference type="DNASU" id="1147980"/>
<dbReference type="EnsemblBacteria" id="AAS61262">
    <property type="protein sequence ID" value="AAS61262"/>
    <property type="gene ID" value="YP_1011"/>
</dbReference>
<dbReference type="GeneID" id="57977288"/>
<dbReference type="KEGG" id="ype:YPO1149"/>
<dbReference type="KEGG" id="ypk:y3033"/>
<dbReference type="KEGG" id="ypm:YP_1011"/>
<dbReference type="PATRIC" id="fig|214092.21.peg.1444"/>
<dbReference type="eggNOG" id="COG2706">
    <property type="taxonomic scope" value="Bacteria"/>
</dbReference>
<dbReference type="HOGENOM" id="CLU_038716_2_0_6"/>
<dbReference type="OMA" id="NKEFIGY"/>
<dbReference type="OrthoDB" id="9790815at2"/>
<dbReference type="UniPathway" id="UPA00115">
    <property type="reaction ID" value="UER00409"/>
</dbReference>
<dbReference type="Proteomes" id="UP000000815">
    <property type="component" value="Chromosome"/>
</dbReference>
<dbReference type="Proteomes" id="UP000001019">
    <property type="component" value="Chromosome"/>
</dbReference>
<dbReference type="Proteomes" id="UP000002490">
    <property type="component" value="Chromosome"/>
</dbReference>
<dbReference type="GO" id="GO:0005829">
    <property type="term" value="C:cytosol"/>
    <property type="evidence" value="ECO:0000318"/>
    <property type="project" value="GO_Central"/>
</dbReference>
<dbReference type="GO" id="GO:0017057">
    <property type="term" value="F:6-phosphogluconolactonase activity"/>
    <property type="evidence" value="ECO:0000318"/>
    <property type="project" value="GO_Central"/>
</dbReference>
<dbReference type="GO" id="GO:0006006">
    <property type="term" value="P:glucose metabolic process"/>
    <property type="evidence" value="ECO:0007669"/>
    <property type="project" value="UniProtKB-KW"/>
</dbReference>
<dbReference type="GO" id="GO:0009051">
    <property type="term" value="P:pentose-phosphate shunt, oxidative branch"/>
    <property type="evidence" value="ECO:0007669"/>
    <property type="project" value="UniProtKB-UniRule"/>
</dbReference>
<dbReference type="FunFam" id="2.130.10.10:FF:000051">
    <property type="entry name" value="6-phosphogluconolactonase"/>
    <property type="match status" value="1"/>
</dbReference>
<dbReference type="Gene3D" id="2.130.10.10">
    <property type="entry name" value="YVTN repeat-like/Quinoprotein amine dehydrogenase"/>
    <property type="match status" value="1"/>
</dbReference>
<dbReference type="HAMAP" id="MF_01605">
    <property type="entry name" value="6P_gluconolactonase"/>
    <property type="match status" value="1"/>
</dbReference>
<dbReference type="InterPro" id="IPR022528">
    <property type="entry name" value="6-phosphogluconolactonase_YbhE"/>
</dbReference>
<dbReference type="InterPro" id="IPR050282">
    <property type="entry name" value="Cycloisomerase_2"/>
</dbReference>
<dbReference type="InterPro" id="IPR019405">
    <property type="entry name" value="Lactonase_7-beta_prop"/>
</dbReference>
<dbReference type="InterPro" id="IPR011045">
    <property type="entry name" value="N2O_reductase_N"/>
</dbReference>
<dbReference type="InterPro" id="IPR015943">
    <property type="entry name" value="WD40/YVTN_repeat-like_dom_sf"/>
</dbReference>
<dbReference type="NCBIfam" id="NF008258">
    <property type="entry name" value="PRK11028.1"/>
    <property type="match status" value="1"/>
</dbReference>
<dbReference type="PANTHER" id="PTHR30344:SF1">
    <property type="entry name" value="6-PHOSPHOGLUCONOLACTONASE"/>
    <property type="match status" value="1"/>
</dbReference>
<dbReference type="PANTHER" id="PTHR30344">
    <property type="entry name" value="6-PHOSPHOGLUCONOLACTONASE-RELATED"/>
    <property type="match status" value="1"/>
</dbReference>
<dbReference type="Pfam" id="PF10282">
    <property type="entry name" value="Lactonase"/>
    <property type="match status" value="1"/>
</dbReference>
<dbReference type="SUPFAM" id="SSF50974">
    <property type="entry name" value="Nitrous oxide reductase, N-terminal domain"/>
    <property type="match status" value="1"/>
</dbReference>